<feature type="signal peptide" evidence="2">
    <location>
        <begin position="1"/>
        <end position="22"/>
    </location>
</feature>
<feature type="chain" id="PRO_0000428305" description="Phosphate-binding protein PstS 3">
    <location>
        <begin position="23"/>
        <end position="370"/>
    </location>
</feature>
<feature type="binding site" evidence="1">
    <location>
        <begin position="56"/>
        <end position="58"/>
    </location>
    <ligand>
        <name>phosphate</name>
        <dbReference type="ChEBI" id="CHEBI:43474"/>
    </ligand>
</feature>
<feature type="binding site" evidence="1">
    <location>
        <position position="86"/>
    </location>
    <ligand>
        <name>phosphate</name>
        <dbReference type="ChEBI" id="CHEBI:43474"/>
    </ligand>
</feature>
<feature type="binding site" evidence="1">
    <location>
        <position position="104"/>
    </location>
    <ligand>
        <name>phosphate</name>
        <dbReference type="ChEBI" id="CHEBI:43474"/>
    </ligand>
</feature>
<feature type="binding site" evidence="1">
    <location>
        <begin position="191"/>
        <end position="193"/>
    </location>
    <ligand>
        <name>phosphate</name>
        <dbReference type="ChEBI" id="CHEBI:43474"/>
    </ligand>
</feature>
<feature type="lipid moiety-binding region" description="N-palmitoyl cysteine" evidence="2">
    <location>
        <position position="23"/>
    </location>
</feature>
<feature type="lipid moiety-binding region" description="S-diacylglycerol cysteine" evidence="2">
    <location>
        <position position="23"/>
    </location>
</feature>
<protein>
    <recommendedName>
        <fullName>Phosphate-binding protein PstS 3</fullName>
        <shortName>PBP 3</shortName>
        <shortName>PstS-3</shortName>
    </recommendedName>
    <alternativeName>
        <fullName>Antigen Ag88</fullName>
    </alternativeName>
</protein>
<organism>
    <name type="scientific">Mycobacterium tuberculosis (strain CDC 1551 / Oshkosh)</name>
    <dbReference type="NCBI Taxonomy" id="83331"/>
    <lineage>
        <taxon>Bacteria</taxon>
        <taxon>Bacillati</taxon>
        <taxon>Actinomycetota</taxon>
        <taxon>Actinomycetes</taxon>
        <taxon>Mycobacteriales</taxon>
        <taxon>Mycobacteriaceae</taxon>
        <taxon>Mycobacterium</taxon>
        <taxon>Mycobacterium tuberculosis complex</taxon>
    </lineage>
</organism>
<name>PSTS3_MYCTO</name>
<comment type="function">
    <text evidence="1">Part of the ABC transporter complex PstSACB involved in phosphate import.</text>
</comment>
<comment type="subunit">
    <text evidence="1">The complex is composed of two ATP-binding proteins (PstB), two transmembrane proteins (PstC and PstA) and a solute-binding protein (PstS).</text>
</comment>
<comment type="subcellular location">
    <subcellularLocation>
        <location evidence="3">Cell membrane</location>
        <topology evidence="3">Lipid-anchor</topology>
    </subcellularLocation>
</comment>
<comment type="similarity">
    <text evidence="3">Belongs to the PstS family.</text>
</comment>
<comment type="sequence caution" evidence="3">
    <conflict type="erroneous initiation">
        <sequence resource="EMBL-CDS" id="AAK45202"/>
    </conflict>
    <text>Extended N-terminus.</text>
</comment>
<gene>
    <name type="primary">pstS3</name>
    <name type="synonym">phoS2</name>
    <name type="ordered locus">MT0955</name>
</gene>
<dbReference type="EMBL" id="AE000516">
    <property type="protein sequence ID" value="AAK45202.1"/>
    <property type="status" value="ALT_INIT"/>
    <property type="molecule type" value="Genomic_DNA"/>
</dbReference>
<dbReference type="PIR" id="H70583">
    <property type="entry name" value="H70583"/>
</dbReference>
<dbReference type="SMR" id="P9WGT6"/>
<dbReference type="KEGG" id="mtc:MT0955"/>
<dbReference type="PATRIC" id="fig|83331.31.peg.1025"/>
<dbReference type="HOGENOM" id="CLU_034528_0_0_11"/>
<dbReference type="Proteomes" id="UP000001020">
    <property type="component" value="Chromosome"/>
</dbReference>
<dbReference type="GO" id="GO:0043190">
    <property type="term" value="C:ATP-binding cassette (ABC) transporter complex"/>
    <property type="evidence" value="ECO:0007669"/>
    <property type="project" value="InterPro"/>
</dbReference>
<dbReference type="GO" id="GO:0042301">
    <property type="term" value="F:phosphate ion binding"/>
    <property type="evidence" value="ECO:0007669"/>
    <property type="project" value="InterPro"/>
</dbReference>
<dbReference type="GO" id="GO:0035435">
    <property type="term" value="P:phosphate ion transmembrane transport"/>
    <property type="evidence" value="ECO:0007669"/>
    <property type="project" value="InterPro"/>
</dbReference>
<dbReference type="CDD" id="cd13565">
    <property type="entry name" value="PBP2_PstS"/>
    <property type="match status" value="1"/>
</dbReference>
<dbReference type="Gene3D" id="3.40.190.10">
    <property type="entry name" value="Periplasmic binding protein-like II"/>
    <property type="match status" value="2"/>
</dbReference>
<dbReference type="InterPro" id="IPR005673">
    <property type="entry name" value="ABC_phos-bd_PstS"/>
</dbReference>
<dbReference type="InterPro" id="IPR024370">
    <property type="entry name" value="PBP_domain"/>
</dbReference>
<dbReference type="InterPro" id="IPR050962">
    <property type="entry name" value="Phosphate-bind_PstS"/>
</dbReference>
<dbReference type="NCBIfam" id="TIGR00975">
    <property type="entry name" value="3a0107s03"/>
    <property type="match status" value="1"/>
</dbReference>
<dbReference type="PANTHER" id="PTHR42996">
    <property type="entry name" value="PHOSPHATE-BINDING PROTEIN PSTS"/>
    <property type="match status" value="1"/>
</dbReference>
<dbReference type="PANTHER" id="PTHR42996:SF1">
    <property type="entry name" value="PHOSPHATE-BINDING PROTEIN PSTS"/>
    <property type="match status" value="1"/>
</dbReference>
<dbReference type="Pfam" id="PF12849">
    <property type="entry name" value="PBP_like_2"/>
    <property type="match status" value="1"/>
</dbReference>
<dbReference type="PIRSF" id="PIRSF002756">
    <property type="entry name" value="PstS"/>
    <property type="match status" value="1"/>
</dbReference>
<dbReference type="SUPFAM" id="SSF53850">
    <property type="entry name" value="Periplasmic binding protein-like II"/>
    <property type="match status" value="1"/>
</dbReference>
<dbReference type="PROSITE" id="PS51257">
    <property type="entry name" value="PROKAR_LIPOPROTEIN"/>
    <property type="match status" value="1"/>
</dbReference>
<sequence length="370" mass="37953">MKLNRFGAAVGVLAAGALVLSACGNDDNVTGGGATTGQASAKVDCGGKKTLKASGSTAQANAMTRFVNVFEQACPGQTLNYTANGSGAGISEFNGNQTDFGGSDVPLSKDEAAAAQRRCGSPAWNLPVVFGPIAVTYNLNSVSSLNLDGPTLAKIFNGSITQWNNPAIQALNRDFTLPGERIHVVFRSDESGTTDNFQRYLQAASNGAWGKGAGKSFQGGVGEGARGNDGTSAAAKNTPGSITYNEWSFAQAQHLTMANIVTSAGGDPVAITIDSVGQTIAGATISGVGNDLVLDTDSFYRPKRPGSYPIVLATYEIVCSKYPDSQVGTAVKAFLQSTIGAGQSGLGDNGYIPIPDEFKSRLSTAVNAIA</sequence>
<accession>P9WGT6</accession>
<accession>L0T5B5</accession>
<accession>O86343</accession>
<accession>P0A5Y2</accession>
<accession>Q50794</accession>
<evidence type="ECO:0000250" key="1">
    <source>
        <dbReference type="UniProtKB" id="P9WGT7"/>
    </source>
</evidence>
<evidence type="ECO:0000255" key="2">
    <source>
        <dbReference type="PROSITE-ProRule" id="PRU00303"/>
    </source>
</evidence>
<evidence type="ECO:0000305" key="3"/>
<reference key="1">
    <citation type="journal article" date="2002" name="J. Bacteriol.">
        <title>Whole-genome comparison of Mycobacterium tuberculosis clinical and laboratory strains.</title>
        <authorList>
            <person name="Fleischmann R.D."/>
            <person name="Alland D."/>
            <person name="Eisen J.A."/>
            <person name="Carpenter L."/>
            <person name="White O."/>
            <person name="Peterson J.D."/>
            <person name="DeBoy R.T."/>
            <person name="Dodson R.J."/>
            <person name="Gwinn M.L."/>
            <person name="Haft D.H."/>
            <person name="Hickey E.K."/>
            <person name="Kolonay J.F."/>
            <person name="Nelson W.C."/>
            <person name="Umayam L.A."/>
            <person name="Ermolaeva M.D."/>
            <person name="Salzberg S.L."/>
            <person name="Delcher A."/>
            <person name="Utterback T.R."/>
            <person name="Weidman J.F."/>
            <person name="Khouri H.M."/>
            <person name="Gill J."/>
            <person name="Mikula A."/>
            <person name="Bishai W."/>
            <person name="Jacobs W.R. Jr."/>
            <person name="Venter J.C."/>
            <person name="Fraser C.M."/>
        </authorList>
    </citation>
    <scope>NUCLEOTIDE SEQUENCE [LARGE SCALE GENOMIC DNA]</scope>
    <source>
        <strain>CDC 1551 / Oshkosh</strain>
    </source>
</reference>
<keyword id="KW-1003">Cell membrane</keyword>
<keyword id="KW-0449">Lipoprotein</keyword>
<keyword id="KW-0472">Membrane</keyword>
<keyword id="KW-0564">Palmitate</keyword>
<keyword id="KW-0592">Phosphate transport</keyword>
<keyword id="KW-1185">Reference proteome</keyword>
<keyword id="KW-0732">Signal</keyword>
<keyword id="KW-0346">Stress response</keyword>
<keyword id="KW-0813">Transport</keyword>
<proteinExistence type="inferred from homology"/>